<reference key="1">
    <citation type="journal article" date="2003" name="Nature">
        <title>Genome divergence in two Prochlorococcus ecotypes reflects oceanic niche differentiation.</title>
        <authorList>
            <person name="Rocap G."/>
            <person name="Larimer F.W."/>
            <person name="Lamerdin J.E."/>
            <person name="Malfatti S."/>
            <person name="Chain P."/>
            <person name="Ahlgren N.A."/>
            <person name="Arellano A."/>
            <person name="Coleman M."/>
            <person name="Hauser L."/>
            <person name="Hess W.R."/>
            <person name="Johnson Z.I."/>
            <person name="Land M.L."/>
            <person name="Lindell D."/>
            <person name="Post A.F."/>
            <person name="Regala W."/>
            <person name="Shah M."/>
            <person name="Shaw S.L."/>
            <person name="Steglich C."/>
            <person name="Sullivan M.B."/>
            <person name="Ting C.S."/>
            <person name="Tolonen A."/>
            <person name="Webb E.A."/>
            <person name="Zinser E.R."/>
            <person name="Chisholm S.W."/>
        </authorList>
    </citation>
    <scope>NUCLEOTIDE SEQUENCE [LARGE SCALE GENOMIC DNA]</scope>
    <source>
        <strain>CCMP1986 / NIES-2087 / MED4</strain>
    </source>
</reference>
<keyword id="KW-0687">Ribonucleoprotein</keyword>
<keyword id="KW-0689">Ribosomal protein</keyword>
<accession>Q7TU99</accession>
<gene>
    <name evidence="1" type="primary">rpmG</name>
    <name evidence="1" type="synonym">rpl33</name>
    <name type="ordered locus">PMM0870</name>
</gene>
<evidence type="ECO:0000255" key="1">
    <source>
        <dbReference type="HAMAP-Rule" id="MF_00294"/>
    </source>
</evidence>
<evidence type="ECO:0000256" key="2">
    <source>
        <dbReference type="SAM" id="MobiDB-lite"/>
    </source>
</evidence>
<evidence type="ECO:0000305" key="3"/>
<proteinExistence type="inferred from homology"/>
<feature type="chain" id="PRO_0000356614" description="Large ribosomal subunit protein bL33">
    <location>
        <begin position="1"/>
        <end position="64"/>
    </location>
</feature>
<feature type="region of interest" description="Disordered" evidence="2">
    <location>
        <begin position="16"/>
        <end position="41"/>
    </location>
</feature>
<feature type="compositionally biased region" description="Basic and acidic residues" evidence="2">
    <location>
        <begin position="16"/>
        <end position="25"/>
    </location>
</feature>
<sequence length="64" mass="7474">MAKKGTRVVVTLECTEARTSSEPRRSNGVSRYTTEKNKRNTTERLELKKFNPHLNKMTIHKEIK</sequence>
<comment type="similarity">
    <text evidence="1">Belongs to the bacterial ribosomal protein bL33 family.</text>
</comment>
<name>RL33_PROMP</name>
<protein>
    <recommendedName>
        <fullName evidence="1">Large ribosomal subunit protein bL33</fullName>
    </recommendedName>
    <alternativeName>
        <fullName evidence="3">50S ribosomal protein L33</fullName>
    </alternativeName>
</protein>
<dbReference type="EMBL" id="BX548174">
    <property type="protein sequence ID" value="CAE19329.1"/>
    <property type="molecule type" value="Genomic_DNA"/>
</dbReference>
<dbReference type="RefSeq" id="WP_011132503.1">
    <property type="nucleotide sequence ID" value="NC_005072.1"/>
</dbReference>
<dbReference type="SMR" id="Q7TU99"/>
<dbReference type="STRING" id="59919.PMM0870"/>
<dbReference type="KEGG" id="pmm:PMM0870"/>
<dbReference type="eggNOG" id="COG0267">
    <property type="taxonomic scope" value="Bacteria"/>
</dbReference>
<dbReference type="HOGENOM" id="CLU_190949_3_0_3"/>
<dbReference type="OrthoDB" id="9801333at2"/>
<dbReference type="Proteomes" id="UP000001026">
    <property type="component" value="Chromosome"/>
</dbReference>
<dbReference type="GO" id="GO:0005737">
    <property type="term" value="C:cytoplasm"/>
    <property type="evidence" value="ECO:0007669"/>
    <property type="project" value="UniProtKB-ARBA"/>
</dbReference>
<dbReference type="GO" id="GO:1990904">
    <property type="term" value="C:ribonucleoprotein complex"/>
    <property type="evidence" value="ECO:0007669"/>
    <property type="project" value="UniProtKB-KW"/>
</dbReference>
<dbReference type="GO" id="GO:0005840">
    <property type="term" value="C:ribosome"/>
    <property type="evidence" value="ECO:0007669"/>
    <property type="project" value="UniProtKB-KW"/>
</dbReference>
<dbReference type="GO" id="GO:0003735">
    <property type="term" value="F:structural constituent of ribosome"/>
    <property type="evidence" value="ECO:0007669"/>
    <property type="project" value="InterPro"/>
</dbReference>
<dbReference type="GO" id="GO:0006412">
    <property type="term" value="P:translation"/>
    <property type="evidence" value="ECO:0007669"/>
    <property type="project" value="UniProtKB-UniRule"/>
</dbReference>
<dbReference type="Gene3D" id="2.20.28.120">
    <property type="entry name" value="Ribosomal protein L33"/>
    <property type="match status" value="1"/>
</dbReference>
<dbReference type="HAMAP" id="MF_00294">
    <property type="entry name" value="Ribosomal_bL33"/>
    <property type="match status" value="1"/>
</dbReference>
<dbReference type="InterPro" id="IPR001705">
    <property type="entry name" value="Ribosomal_bL33"/>
</dbReference>
<dbReference type="InterPro" id="IPR038584">
    <property type="entry name" value="Ribosomal_bL33_sf"/>
</dbReference>
<dbReference type="InterPro" id="IPR011332">
    <property type="entry name" value="Ribosomal_zn-bd"/>
</dbReference>
<dbReference type="NCBIfam" id="NF001764">
    <property type="entry name" value="PRK00504.1"/>
    <property type="match status" value="1"/>
</dbReference>
<dbReference type="NCBIfam" id="NF001860">
    <property type="entry name" value="PRK00595.1"/>
    <property type="match status" value="1"/>
</dbReference>
<dbReference type="NCBIfam" id="TIGR01023">
    <property type="entry name" value="rpmG_bact"/>
    <property type="match status" value="1"/>
</dbReference>
<dbReference type="PANTHER" id="PTHR43168">
    <property type="entry name" value="50S RIBOSOMAL PROTEIN L33, CHLOROPLASTIC"/>
    <property type="match status" value="1"/>
</dbReference>
<dbReference type="PANTHER" id="PTHR43168:SF2">
    <property type="entry name" value="LARGE RIBOSOMAL SUBUNIT PROTEIN BL33C"/>
    <property type="match status" value="1"/>
</dbReference>
<dbReference type="Pfam" id="PF00471">
    <property type="entry name" value="Ribosomal_L33"/>
    <property type="match status" value="1"/>
</dbReference>
<dbReference type="SUPFAM" id="SSF57829">
    <property type="entry name" value="Zn-binding ribosomal proteins"/>
    <property type="match status" value="1"/>
</dbReference>
<organism>
    <name type="scientific">Prochlorococcus marinus subsp. pastoris (strain CCMP1986 / NIES-2087 / MED4)</name>
    <dbReference type="NCBI Taxonomy" id="59919"/>
    <lineage>
        <taxon>Bacteria</taxon>
        <taxon>Bacillati</taxon>
        <taxon>Cyanobacteriota</taxon>
        <taxon>Cyanophyceae</taxon>
        <taxon>Synechococcales</taxon>
        <taxon>Prochlorococcaceae</taxon>
        <taxon>Prochlorococcus</taxon>
    </lineage>
</organism>